<organism>
    <name type="scientific">Xanthobacter autotrophicus (strain ATCC BAA-1158 / Py2)</name>
    <dbReference type="NCBI Taxonomy" id="78245"/>
    <lineage>
        <taxon>Bacteria</taxon>
        <taxon>Pseudomonadati</taxon>
        <taxon>Pseudomonadota</taxon>
        <taxon>Alphaproteobacteria</taxon>
        <taxon>Hyphomicrobiales</taxon>
        <taxon>Xanthobacteraceae</taxon>
        <taxon>Xanthobacter</taxon>
    </lineage>
</organism>
<evidence type="ECO:0000255" key="1">
    <source>
        <dbReference type="HAMAP-Rule" id="MF_00181"/>
    </source>
</evidence>
<accession>A7IFB7</accession>
<gene>
    <name evidence="1" type="primary">pepA</name>
    <name type="ordered locus">Xaut_1462</name>
</gene>
<proteinExistence type="inferred from homology"/>
<comment type="function">
    <text evidence="1">Presumably involved in the processing and regular turnover of intracellular proteins. Catalyzes the removal of unsubstituted N-terminal amino acids from various peptides.</text>
</comment>
<comment type="catalytic activity">
    <reaction evidence="1">
        <text>Release of an N-terminal amino acid, Xaa-|-Yaa-, in which Xaa is preferably Leu, but may be other amino acids including Pro although not Arg or Lys, and Yaa may be Pro. Amino acid amides and methyl esters are also readily hydrolyzed, but rates on arylamides are exceedingly low.</text>
        <dbReference type="EC" id="3.4.11.1"/>
    </reaction>
</comment>
<comment type="catalytic activity">
    <reaction evidence="1">
        <text>Release of an N-terminal amino acid, preferentially leucine, but not glutamic or aspartic acids.</text>
        <dbReference type="EC" id="3.4.11.10"/>
    </reaction>
</comment>
<comment type="cofactor">
    <cofactor evidence="1">
        <name>Mn(2+)</name>
        <dbReference type="ChEBI" id="CHEBI:29035"/>
    </cofactor>
    <text evidence="1">Binds 2 manganese ions per subunit.</text>
</comment>
<comment type="subcellular location">
    <subcellularLocation>
        <location evidence="1">Cytoplasm</location>
    </subcellularLocation>
</comment>
<comment type="similarity">
    <text evidence="1">Belongs to the peptidase M17 family.</text>
</comment>
<name>AMPA_XANP2</name>
<sequence>MSEPVTLSFARLTAAPKGVLIVLTDETLAFGAQTQKLLKGADAAITRAFDAERYKGKAWSTIDLLAPAGLDAPRLVVISVGKAGELKPADFLKLGGVAAGKIPSSAREATVVLDLPGAKIGPESAAEVALGIRLRTYSFDRYKTKKKDDTERGALAMTLLVSDEAGTKRAATTADAVGDGVLFARDLVNEPANVLDPPEFARRAEEHLSSVGVEIEVLDDAGLARAGMHTLLGVGQGSIKESRVVIMRWNGGPAGEPPVAFIGKGVTFDTGGISIKPAAGMEDMKGDMGGAACVTGLMYALAARKAKVNAVGLIGLVENMPDGAAQRPGDIVTSLSGQTIEIINTDAEGRLVLCDVLWYAKEQFKPKFMIDLATLTGAILVALGSEYAGLFSNDDTLSERLTKTGQETGERVWRMPLGPEYDKLVDSKFADMKNTGGRHAGSITAAQFLQRFVDKTPWAHLDIAGTAMSSPASDINKSWGSGWGVRLLNQLVKDHYEG</sequence>
<keyword id="KW-0031">Aminopeptidase</keyword>
<keyword id="KW-0963">Cytoplasm</keyword>
<keyword id="KW-0378">Hydrolase</keyword>
<keyword id="KW-0464">Manganese</keyword>
<keyword id="KW-0479">Metal-binding</keyword>
<keyword id="KW-0645">Protease</keyword>
<keyword id="KW-1185">Reference proteome</keyword>
<reference key="1">
    <citation type="submission" date="2007-07" db="EMBL/GenBank/DDBJ databases">
        <title>Complete sequence of chromosome of Xanthobacter autotrophicus Py2.</title>
        <authorList>
            <consortium name="US DOE Joint Genome Institute"/>
            <person name="Copeland A."/>
            <person name="Lucas S."/>
            <person name="Lapidus A."/>
            <person name="Barry K."/>
            <person name="Glavina del Rio T."/>
            <person name="Hammon N."/>
            <person name="Israni S."/>
            <person name="Dalin E."/>
            <person name="Tice H."/>
            <person name="Pitluck S."/>
            <person name="Sims D."/>
            <person name="Brettin T."/>
            <person name="Bruce D."/>
            <person name="Detter J.C."/>
            <person name="Han C."/>
            <person name="Tapia R."/>
            <person name="Brainard J."/>
            <person name="Schmutz J."/>
            <person name="Larimer F."/>
            <person name="Land M."/>
            <person name="Hauser L."/>
            <person name="Kyrpides N."/>
            <person name="Kim E."/>
            <person name="Ensigns S.A."/>
            <person name="Richardson P."/>
        </authorList>
    </citation>
    <scope>NUCLEOTIDE SEQUENCE [LARGE SCALE GENOMIC DNA]</scope>
    <source>
        <strain>ATCC BAA-1158 / Py2</strain>
    </source>
</reference>
<protein>
    <recommendedName>
        <fullName evidence="1">Probable cytosol aminopeptidase</fullName>
        <ecNumber evidence="1">3.4.11.1</ecNumber>
    </recommendedName>
    <alternativeName>
        <fullName evidence="1">Leucine aminopeptidase</fullName>
        <shortName evidence="1">LAP</shortName>
        <ecNumber evidence="1">3.4.11.10</ecNumber>
    </alternativeName>
    <alternativeName>
        <fullName evidence="1">Leucyl aminopeptidase</fullName>
    </alternativeName>
</protein>
<dbReference type="EC" id="3.4.11.1" evidence="1"/>
<dbReference type="EC" id="3.4.11.10" evidence="1"/>
<dbReference type="EMBL" id="CP000781">
    <property type="protein sequence ID" value="ABS66710.1"/>
    <property type="molecule type" value="Genomic_DNA"/>
</dbReference>
<dbReference type="SMR" id="A7IFB7"/>
<dbReference type="STRING" id="78245.Xaut_1462"/>
<dbReference type="KEGG" id="xau:Xaut_1462"/>
<dbReference type="eggNOG" id="COG0260">
    <property type="taxonomic scope" value="Bacteria"/>
</dbReference>
<dbReference type="HOGENOM" id="CLU_013734_6_0_5"/>
<dbReference type="OrthoDB" id="9809354at2"/>
<dbReference type="PhylomeDB" id="A7IFB7"/>
<dbReference type="Proteomes" id="UP000002417">
    <property type="component" value="Chromosome"/>
</dbReference>
<dbReference type="GO" id="GO:0005737">
    <property type="term" value="C:cytoplasm"/>
    <property type="evidence" value="ECO:0007669"/>
    <property type="project" value="UniProtKB-SubCell"/>
</dbReference>
<dbReference type="GO" id="GO:0030145">
    <property type="term" value="F:manganese ion binding"/>
    <property type="evidence" value="ECO:0007669"/>
    <property type="project" value="UniProtKB-UniRule"/>
</dbReference>
<dbReference type="GO" id="GO:0070006">
    <property type="term" value="F:metalloaminopeptidase activity"/>
    <property type="evidence" value="ECO:0007669"/>
    <property type="project" value="InterPro"/>
</dbReference>
<dbReference type="GO" id="GO:0006508">
    <property type="term" value="P:proteolysis"/>
    <property type="evidence" value="ECO:0007669"/>
    <property type="project" value="UniProtKB-KW"/>
</dbReference>
<dbReference type="CDD" id="cd00433">
    <property type="entry name" value="Peptidase_M17"/>
    <property type="match status" value="1"/>
</dbReference>
<dbReference type="Gene3D" id="3.40.220.10">
    <property type="entry name" value="Leucine Aminopeptidase, subunit E, domain 1"/>
    <property type="match status" value="1"/>
</dbReference>
<dbReference type="Gene3D" id="3.40.630.10">
    <property type="entry name" value="Zn peptidases"/>
    <property type="match status" value="1"/>
</dbReference>
<dbReference type="HAMAP" id="MF_00181">
    <property type="entry name" value="Cytosol_peptidase_M17"/>
    <property type="match status" value="1"/>
</dbReference>
<dbReference type="InterPro" id="IPR011356">
    <property type="entry name" value="Leucine_aapep/pepB"/>
</dbReference>
<dbReference type="InterPro" id="IPR043472">
    <property type="entry name" value="Macro_dom-like"/>
</dbReference>
<dbReference type="InterPro" id="IPR000819">
    <property type="entry name" value="Peptidase_M17_C"/>
</dbReference>
<dbReference type="InterPro" id="IPR023042">
    <property type="entry name" value="Peptidase_M17_leu_NH2_pept"/>
</dbReference>
<dbReference type="InterPro" id="IPR008283">
    <property type="entry name" value="Peptidase_M17_N"/>
</dbReference>
<dbReference type="NCBIfam" id="NF002073">
    <property type="entry name" value="PRK00913.1-2"/>
    <property type="match status" value="1"/>
</dbReference>
<dbReference type="NCBIfam" id="NF002074">
    <property type="entry name" value="PRK00913.1-4"/>
    <property type="match status" value="1"/>
</dbReference>
<dbReference type="NCBIfam" id="NF002075">
    <property type="entry name" value="PRK00913.2-2"/>
    <property type="match status" value="1"/>
</dbReference>
<dbReference type="NCBIfam" id="NF002077">
    <property type="entry name" value="PRK00913.2-4"/>
    <property type="match status" value="1"/>
</dbReference>
<dbReference type="PANTHER" id="PTHR11963:SF23">
    <property type="entry name" value="CYTOSOL AMINOPEPTIDASE"/>
    <property type="match status" value="1"/>
</dbReference>
<dbReference type="PANTHER" id="PTHR11963">
    <property type="entry name" value="LEUCINE AMINOPEPTIDASE-RELATED"/>
    <property type="match status" value="1"/>
</dbReference>
<dbReference type="Pfam" id="PF00883">
    <property type="entry name" value="Peptidase_M17"/>
    <property type="match status" value="1"/>
</dbReference>
<dbReference type="Pfam" id="PF02789">
    <property type="entry name" value="Peptidase_M17_N"/>
    <property type="match status" value="1"/>
</dbReference>
<dbReference type="PRINTS" id="PR00481">
    <property type="entry name" value="LAMNOPPTDASE"/>
</dbReference>
<dbReference type="SUPFAM" id="SSF52949">
    <property type="entry name" value="Macro domain-like"/>
    <property type="match status" value="1"/>
</dbReference>
<dbReference type="SUPFAM" id="SSF53187">
    <property type="entry name" value="Zn-dependent exopeptidases"/>
    <property type="match status" value="1"/>
</dbReference>
<dbReference type="PROSITE" id="PS00631">
    <property type="entry name" value="CYTOSOL_AP"/>
    <property type="match status" value="1"/>
</dbReference>
<feature type="chain" id="PRO_1000098361" description="Probable cytosol aminopeptidase">
    <location>
        <begin position="1"/>
        <end position="498"/>
    </location>
</feature>
<feature type="active site" evidence="1">
    <location>
        <position position="276"/>
    </location>
</feature>
<feature type="active site" evidence="1">
    <location>
        <position position="350"/>
    </location>
</feature>
<feature type="binding site" evidence="1">
    <location>
        <position position="264"/>
    </location>
    <ligand>
        <name>Mn(2+)</name>
        <dbReference type="ChEBI" id="CHEBI:29035"/>
        <label>2</label>
    </ligand>
</feature>
<feature type="binding site" evidence="1">
    <location>
        <position position="269"/>
    </location>
    <ligand>
        <name>Mn(2+)</name>
        <dbReference type="ChEBI" id="CHEBI:29035"/>
        <label>1</label>
    </ligand>
</feature>
<feature type="binding site" evidence="1">
    <location>
        <position position="269"/>
    </location>
    <ligand>
        <name>Mn(2+)</name>
        <dbReference type="ChEBI" id="CHEBI:29035"/>
        <label>2</label>
    </ligand>
</feature>
<feature type="binding site" evidence="1">
    <location>
        <position position="287"/>
    </location>
    <ligand>
        <name>Mn(2+)</name>
        <dbReference type="ChEBI" id="CHEBI:29035"/>
        <label>2</label>
    </ligand>
</feature>
<feature type="binding site" evidence="1">
    <location>
        <position position="346"/>
    </location>
    <ligand>
        <name>Mn(2+)</name>
        <dbReference type="ChEBI" id="CHEBI:29035"/>
        <label>1</label>
    </ligand>
</feature>
<feature type="binding site" evidence="1">
    <location>
        <position position="348"/>
    </location>
    <ligand>
        <name>Mn(2+)</name>
        <dbReference type="ChEBI" id="CHEBI:29035"/>
        <label>1</label>
    </ligand>
</feature>
<feature type="binding site" evidence="1">
    <location>
        <position position="348"/>
    </location>
    <ligand>
        <name>Mn(2+)</name>
        <dbReference type="ChEBI" id="CHEBI:29035"/>
        <label>2</label>
    </ligand>
</feature>